<feature type="chain" id="PRO_0000430380" description="Jacalin-related lectin 13">
    <location>
        <begin position="1"/>
        <end position="483"/>
    </location>
</feature>
<feature type="domain" description="Jacalin-type lectin 1" evidence="1">
    <location>
        <begin position="2"/>
        <end position="147"/>
    </location>
</feature>
<feature type="domain" description="Jacalin-type lectin 2" evidence="1">
    <location>
        <begin position="150"/>
        <end position="295"/>
    </location>
</feature>
<feature type="domain" description="Jacalin-type lectin 3" evidence="1">
    <location>
        <begin position="307"/>
        <end position="461"/>
    </location>
</feature>
<feature type="region of interest" description="Disordered" evidence="2">
    <location>
        <begin position="1"/>
        <end position="20"/>
    </location>
</feature>
<reference key="1">
    <citation type="journal article" date="2000" name="Nature">
        <title>Sequence and analysis of chromosome 1 of the plant Arabidopsis thaliana.</title>
        <authorList>
            <person name="Theologis A."/>
            <person name="Ecker J.R."/>
            <person name="Palm C.J."/>
            <person name="Federspiel N.A."/>
            <person name="Kaul S."/>
            <person name="White O."/>
            <person name="Alonso J."/>
            <person name="Altafi H."/>
            <person name="Araujo R."/>
            <person name="Bowman C.L."/>
            <person name="Brooks S.Y."/>
            <person name="Buehler E."/>
            <person name="Chan A."/>
            <person name="Chao Q."/>
            <person name="Chen H."/>
            <person name="Cheuk R.F."/>
            <person name="Chin C.W."/>
            <person name="Chung M.K."/>
            <person name="Conn L."/>
            <person name="Conway A.B."/>
            <person name="Conway A.R."/>
            <person name="Creasy T.H."/>
            <person name="Dewar K."/>
            <person name="Dunn P."/>
            <person name="Etgu P."/>
            <person name="Feldblyum T.V."/>
            <person name="Feng J.-D."/>
            <person name="Fong B."/>
            <person name="Fujii C.Y."/>
            <person name="Gill J.E."/>
            <person name="Goldsmith A.D."/>
            <person name="Haas B."/>
            <person name="Hansen N.F."/>
            <person name="Hughes B."/>
            <person name="Huizar L."/>
            <person name="Hunter J.L."/>
            <person name="Jenkins J."/>
            <person name="Johnson-Hopson C."/>
            <person name="Khan S."/>
            <person name="Khaykin E."/>
            <person name="Kim C.J."/>
            <person name="Koo H.L."/>
            <person name="Kremenetskaia I."/>
            <person name="Kurtz D.B."/>
            <person name="Kwan A."/>
            <person name="Lam B."/>
            <person name="Langin-Hooper S."/>
            <person name="Lee A."/>
            <person name="Lee J.M."/>
            <person name="Lenz C.A."/>
            <person name="Li J.H."/>
            <person name="Li Y.-P."/>
            <person name="Lin X."/>
            <person name="Liu S.X."/>
            <person name="Liu Z.A."/>
            <person name="Luros J.S."/>
            <person name="Maiti R."/>
            <person name="Marziali A."/>
            <person name="Militscher J."/>
            <person name="Miranda M."/>
            <person name="Nguyen M."/>
            <person name="Nierman W.C."/>
            <person name="Osborne B.I."/>
            <person name="Pai G."/>
            <person name="Peterson J."/>
            <person name="Pham P.K."/>
            <person name="Rizzo M."/>
            <person name="Rooney T."/>
            <person name="Rowley D."/>
            <person name="Sakano H."/>
            <person name="Salzberg S.L."/>
            <person name="Schwartz J.R."/>
            <person name="Shinn P."/>
            <person name="Southwick A.M."/>
            <person name="Sun H."/>
            <person name="Tallon L.J."/>
            <person name="Tambunga G."/>
            <person name="Toriumi M.J."/>
            <person name="Town C.D."/>
            <person name="Utterback T."/>
            <person name="Van Aken S."/>
            <person name="Vaysberg M."/>
            <person name="Vysotskaia V.S."/>
            <person name="Walker M."/>
            <person name="Wu D."/>
            <person name="Yu G."/>
            <person name="Fraser C.M."/>
            <person name="Venter J.C."/>
            <person name="Davis R.W."/>
        </authorList>
    </citation>
    <scope>NUCLEOTIDE SEQUENCE [LARGE SCALE GENOMIC DNA]</scope>
    <source>
        <strain>cv. Columbia</strain>
    </source>
</reference>
<reference key="2">
    <citation type="journal article" date="2017" name="Plant J.">
        <title>Araport11: a complete reannotation of the Arabidopsis thaliana reference genome.</title>
        <authorList>
            <person name="Cheng C.Y."/>
            <person name="Krishnakumar V."/>
            <person name="Chan A.P."/>
            <person name="Thibaud-Nissen F."/>
            <person name="Schobel S."/>
            <person name="Town C.D."/>
        </authorList>
    </citation>
    <scope>GENOME REANNOTATION</scope>
    <source>
        <strain>cv. Columbia</strain>
    </source>
</reference>
<reference key="3">
    <citation type="journal article" date="2008" name="Plant Cell Physiol.">
        <title>Antagonistic jacalin-related lectins regulate the size of ER body-type beta-glucosidase complexes in Arabidopsis thaliana.</title>
        <authorList>
            <person name="Nagano A.J."/>
            <person name="Fukao Y."/>
            <person name="Fujiwara M."/>
            <person name="Nishimura M."/>
            <person name="Hara-Nishimura I."/>
        </authorList>
    </citation>
    <scope>GENE FAMILY</scope>
    <scope>NOMENCLATURE</scope>
</reference>
<gene>
    <name type="primary">JAL13</name>
    <name type="ordered locus">At1g52130</name>
    <name type="ORF">F5F19.19</name>
</gene>
<protein>
    <recommendedName>
        <fullName>Jacalin-related lectin 13</fullName>
    </recommendedName>
</protein>
<comment type="similarity">
    <text evidence="1 3">Belongs to the jacalin lectin family.</text>
</comment>
<dbReference type="EMBL" id="AC006216">
    <property type="protein sequence ID" value="AAD12687.1"/>
    <property type="molecule type" value="Genomic_DNA"/>
</dbReference>
<dbReference type="EMBL" id="CP002684">
    <property type="protein sequence ID" value="AEE32758.1"/>
    <property type="molecule type" value="Genomic_DNA"/>
</dbReference>
<dbReference type="EMBL" id="CP002684">
    <property type="protein sequence ID" value="ANM59235.1"/>
    <property type="molecule type" value="Genomic_DNA"/>
</dbReference>
<dbReference type="PIR" id="C96561">
    <property type="entry name" value="C96561"/>
</dbReference>
<dbReference type="RefSeq" id="NP_001319204.1">
    <property type="nucleotide sequence ID" value="NM_001333529.1"/>
</dbReference>
<dbReference type="RefSeq" id="NP_175625.1">
    <property type="nucleotide sequence ID" value="NM_104094.1"/>
</dbReference>
<dbReference type="SMR" id="Q9ZU13"/>
<dbReference type="FunCoup" id="Q9ZU13">
    <property type="interactions" value="4"/>
</dbReference>
<dbReference type="STRING" id="3702.Q9ZU13"/>
<dbReference type="GlyGen" id="Q9ZU13">
    <property type="glycosylation" value="1 site"/>
</dbReference>
<dbReference type="PaxDb" id="3702-AT1G52130.1"/>
<dbReference type="ProteomicsDB" id="232257"/>
<dbReference type="EnsemblPlants" id="AT1G52130.1">
    <property type="protein sequence ID" value="AT1G52130.1"/>
    <property type="gene ID" value="AT1G52130"/>
</dbReference>
<dbReference type="EnsemblPlants" id="AT1G52130.2">
    <property type="protein sequence ID" value="AT1G52130.2"/>
    <property type="gene ID" value="AT1G52130"/>
</dbReference>
<dbReference type="GeneID" id="841643"/>
<dbReference type="Gramene" id="AT1G52130.1">
    <property type="protein sequence ID" value="AT1G52130.1"/>
    <property type="gene ID" value="AT1G52130"/>
</dbReference>
<dbReference type="Gramene" id="AT1G52130.2">
    <property type="protein sequence ID" value="AT1G52130.2"/>
    <property type="gene ID" value="AT1G52130"/>
</dbReference>
<dbReference type="KEGG" id="ath:AT1G52130"/>
<dbReference type="Araport" id="AT1G52130"/>
<dbReference type="TAIR" id="AT1G52130"/>
<dbReference type="eggNOG" id="ENOG502SDKK">
    <property type="taxonomic scope" value="Eukaryota"/>
</dbReference>
<dbReference type="HOGENOM" id="CLU_041730_0_0_1"/>
<dbReference type="InParanoid" id="Q9ZU13"/>
<dbReference type="OMA" id="YVTWITP"/>
<dbReference type="PhylomeDB" id="Q9ZU13"/>
<dbReference type="PRO" id="PR:Q9ZU13"/>
<dbReference type="Proteomes" id="UP000006548">
    <property type="component" value="Chromosome 1"/>
</dbReference>
<dbReference type="ExpressionAtlas" id="Q9ZU13">
    <property type="expression patterns" value="baseline and differential"/>
</dbReference>
<dbReference type="GO" id="GO:0030246">
    <property type="term" value="F:carbohydrate binding"/>
    <property type="evidence" value="ECO:0007669"/>
    <property type="project" value="UniProtKB-KW"/>
</dbReference>
<dbReference type="CDD" id="cd09612">
    <property type="entry name" value="Jacalin"/>
    <property type="match status" value="3"/>
</dbReference>
<dbReference type="FunFam" id="2.100.10.30:FF:000001">
    <property type="entry name" value="Jacalin-related lectin 33"/>
    <property type="match status" value="3"/>
</dbReference>
<dbReference type="Gene3D" id="2.100.10.30">
    <property type="entry name" value="Jacalin-like lectin domain"/>
    <property type="match status" value="3"/>
</dbReference>
<dbReference type="InterPro" id="IPR001229">
    <property type="entry name" value="Jacalin-like_lectin_dom"/>
</dbReference>
<dbReference type="InterPro" id="IPR033734">
    <property type="entry name" value="Jacalin-like_lectin_dom_plant"/>
</dbReference>
<dbReference type="InterPro" id="IPR036404">
    <property type="entry name" value="Jacalin-like_lectin_dom_sf"/>
</dbReference>
<dbReference type="PANTHER" id="PTHR47293:SF11">
    <property type="entry name" value="JACALIN-RELATED LECTIN 12-RELATED"/>
    <property type="match status" value="1"/>
</dbReference>
<dbReference type="PANTHER" id="PTHR47293">
    <property type="entry name" value="JACALIN-RELATED LECTIN 3"/>
    <property type="match status" value="1"/>
</dbReference>
<dbReference type="Pfam" id="PF01419">
    <property type="entry name" value="Jacalin"/>
    <property type="match status" value="3"/>
</dbReference>
<dbReference type="SMART" id="SM00915">
    <property type="entry name" value="Jacalin"/>
    <property type="match status" value="3"/>
</dbReference>
<dbReference type="SUPFAM" id="SSF51101">
    <property type="entry name" value="Mannose-binding lectins"/>
    <property type="match status" value="3"/>
</dbReference>
<dbReference type="PROSITE" id="PS51752">
    <property type="entry name" value="JACALIN_LECTIN"/>
    <property type="match status" value="3"/>
</dbReference>
<proteinExistence type="inferred from homology"/>
<name>JAL13_ARATH</name>
<evidence type="ECO:0000255" key="1">
    <source>
        <dbReference type="PROSITE-ProRule" id="PRU01088"/>
    </source>
</evidence>
<evidence type="ECO:0000256" key="2">
    <source>
        <dbReference type="SAM" id="MobiDB-lite"/>
    </source>
</evidence>
<evidence type="ECO:0000305" key="3"/>
<accession>Q9ZU13</accession>
<organism>
    <name type="scientific">Arabidopsis thaliana</name>
    <name type="common">Mouse-ear cress</name>
    <dbReference type="NCBI Taxonomy" id="3702"/>
    <lineage>
        <taxon>Eukaryota</taxon>
        <taxon>Viridiplantae</taxon>
        <taxon>Streptophyta</taxon>
        <taxon>Embryophyta</taxon>
        <taxon>Tracheophyta</taxon>
        <taxon>Spermatophyta</taxon>
        <taxon>Magnoliopsida</taxon>
        <taxon>eudicotyledons</taxon>
        <taxon>Gunneridae</taxon>
        <taxon>Pentapetalae</taxon>
        <taxon>rosids</taxon>
        <taxon>malvids</taxon>
        <taxon>Brassicales</taxon>
        <taxon>Brassicaceae</taxon>
        <taxon>Camelineae</taxon>
        <taxon>Arabidopsis</taxon>
    </lineage>
</organism>
<sequence length="483" mass="53569">MTQKLESVGSERKSSEYMWDDGSEHDDVTKIYVRGGTKGIEFIKFGYVKAGELLDGSFHGYSDTGFTQMFEIDHRKNEHLLSVEGYFDYYNDIMYAIQFKTNLKISEIMGYEYSGHKFTLAMEGKKIIGFHGFADVNLRALGAYVTWITPARMEAKGGKGGNEWDDGGDYEAVTKIHGRSDHKGIKDIIFDYVDKDGHPKSETHGPTSGQGYVLEPFEINHLDKEYLMSIDGYYDDASGVIQALQFKTNMKTSELMGYYDDDAVKFTIGCTVNKIIGFHGHAGKNLYSLGAYFTTLPLTKLEYEDSFREKLPKNGASGNLWDDGSFQGVKKVHIYYDGYSVRCVRFDYDDDGKVESREHGPKIVAAVQEGGFVLDYPNEVITSVEGIATVVNTGLSFSTGNVMIKSLTFKTSKGRTSPTFGNVFGNYLSEFKLESQGCAIVGFHGRSSYNSIHGLGAYFFPMPPSHDGKALEEQGGDGGLGGV</sequence>
<keyword id="KW-0430">Lectin</keyword>
<keyword id="KW-1185">Reference proteome</keyword>
<keyword id="KW-0677">Repeat</keyword>